<sequence>MTWRHHVRLLFTVSLALQIINLGNSYQREKHNGGREEVTKVATQKHRQSPLNWTSSHFGEVTGSAEGWGPEEPLPYSRAFGEGASARPRCCRNGGTCVLGSFCVCPAHFTGRYCEHDQRRSECGALEHGAWTLRACHLCRCIFGALHCLPLQTPDRCDPKDFLASHAHGPSAGGAPSLLLLLPCALLHRLLRPDAPAHPRSLVPSVLQRERRPCGRPGLGHRL</sequence>
<name>CFC1_HUMAN</name>
<comment type="function">
    <text evidence="4">NODAL coreceptor involved in the correct establishment of the left-right axis. May play a role in mesoderm and/or neural patterning during gastrulation.</text>
</comment>
<comment type="subcellular location">
    <subcellularLocation>
        <location evidence="6">Cell membrane</location>
        <topology evidence="6">Lipid-anchor</topology>
        <topology evidence="6">GPI-anchor</topology>
    </subcellularLocation>
    <subcellularLocation>
        <location evidence="6">Secreted</location>
    </subcellularLocation>
    <text>Does not exhibit a typical GPI-signal sequence. The C-ter hydrophilic extension of the GPI-signal sequence reduces the efficiency of processing and could lead to the production of an secreted unprocessed form. This extension is found only in primates.</text>
</comment>
<comment type="PTM">
    <text evidence="1">N-glycosylated.</text>
</comment>
<comment type="disease" evidence="4 5">
    <disease id="DI-02413">
        <name>Heterotaxy, visceral, 2, autosomal</name>
        <acronym>HTX2</acronym>
        <description>A form of visceral heterotaxy, a complex disorder due to disruption of the normal left-right asymmetry of the thoracoabdominal organs. Visceral heterotaxy or situs ambiguus results in randomization of the placement of visceral organs, including the heart, lungs, liver, spleen, and stomach. The organs are oriented randomly with respect to the left-right axis and with respect to one another. It can be associated with a variety of congenital defects including cardiac malformations.</description>
        <dbReference type="MIM" id="605376"/>
    </disease>
    <text>The disease is caused by variants affecting the gene represented in this entry.</text>
</comment>
<comment type="similarity">
    <text evidence="7">Belongs to the EGF-CFC (Cripto-1/FRL1/Cryptic) family.</text>
</comment>
<comment type="caution">
    <text evidence="7">This gene differs from CFC1B by only one residue at position 78:R -&gt; W. R78W is also thought to be a CFC1 polymorphism which has been shown to lead to a different cell surface distribution and activity (PubMed:11062482, PubMed:11799476).</text>
</comment>
<protein>
    <recommendedName>
        <fullName>Cryptic protein</fullName>
    </recommendedName>
    <alternativeName>
        <fullName>Cryptic family protein 1</fullName>
    </alternativeName>
</protein>
<evidence type="ECO:0000250" key="1"/>
<evidence type="ECO:0000255" key="2"/>
<evidence type="ECO:0000255" key="3">
    <source>
        <dbReference type="PROSITE-ProRule" id="PRU00076"/>
    </source>
</evidence>
<evidence type="ECO:0000269" key="4">
    <source>
    </source>
</evidence>
<evidence type="ECO:0000269" key="5">
    <source>
    </source>
</evidence>
<evidence type="ECO:0000269" key="6">
    <source>
    </source>
</evidence>
<evidence type="ECO:0000305" key="7"/>
<feature type="signal peptide" evidence="2">
    <location>
        <begin position="1"/>
        <end position="25"/>
    </location>
</feature>
<feature type="chain" id="PRO_0000044630" description="Cryptic protein">
    <location>
        <begin position="26"/>
        <end position="158"/>
    </location>
</feature>
<feature type="propeptide" id="PRO_0000395407" description="Removed in mature form">
    <location>
        <begin position="159"/>
        <end position="223"/>
    </location>
</feature>
<feature type="domain" description="EGF-like" evidence="3">
    <location>
        <begin position="86"/>
        <end position="115"/>
    </location>
</feature>
<feature type="lipid moiety-binding region" description="GPI-anchor amidated aspartate" evidence="6">
    <location>
        <position position="158"/>
    </location>
</feature>
<feature type="glycosylation site" description="N-linked (GlcNAc...) asparagine" evidence="2">
    <location>
        <position position="52"/>
    </location>
</feature>
<feature type="disulfide bond" evidence="3">
    <location>
        <begin position="90"/>
        <end position="97"/>
    </location>
</feature>
<feature type="disulfide bond" evidence="3">
    <location>
        <begin position="91"/>
        <end position="103"/>
    </location>
</feature>
<feature type="disulfide bond" evidence="3">
    <location>
        <begin position="105"/>
        <end position="114"/>
    </location>
</feature>
<feature type="sequence variant" id="VAR_024322" description="In dbSNP:rs1318519716." evidence="4 5">
    <original>R</original>
    <variation>W</variation>
    <location>
        <position position="78"/>
    </location>
</feature>
<feature type="sequence variant" id="VAR_024323" description="In HTX2; complete loss of activity; abnormal cell surface localization; dbSNP:rs104893611." evidence="4">
    <original>R</original>
    <variation>C</variation>
    <location>
        <position position="112"/>
    </location>
</feature>
<feature type="sequence variant" id="VAR_024324" description="In dbSNP:rs1350439781." evidence="4">
    <original>R</original>
    <variation>C</variation>
    <location>
        <position position="189"/>
    </location>
</feature>
<feature type="mutagenesis site" description="Does not affect the cellular localization and the biological activity.">
    <original>LRPDAPAHPRSLVPSVLQRERRPCGRPGLGHRL</original>
    <variation>VVVVV</variation>
    <location>
        <begin position="191"/>
        <end position="223"/>
    </location>
</feature>
<feature type="mutagenesis site" description="Increased NODAL dependent signaling.">
    <location>
        <begin position="191"/>
        <end position="223"/>
    </location>
</feature>
<proteinExistence type="evidence at protein level"/>
<accession>P0CG37</accession>
<accession>B2RCY0</accession>
<accession>B9EJD3</accession>
<accession>Q53T05</accession>
<accession>Q9GZR3</accession>
<reference key="1">
    <citation type="journal article" date="2000" name="Nat. Genet.">
        <title>Loss-of-function mutations in the EGF-CFC gene CFC1 are associated with human left-right laterality defects.</title>
        <authorList>
            <person name="Bamford R.N."/>
            <person name="Roessler E."/>
            <person name="Burdine R.D."/>
            <person name="Saplakoglu U."/>
            <person name="dela Cruz J."/>
            <person name="Splitt M."/>
            <person name="Towbin J."/>
            <person name="Bowers P."/>
            <person name="Marino B."/>
            <person name="Schier A.F."/>
            <person name="Shen M.M."/>
            <person name="Muenke M."/>
            <person name="Casey B."/>
        </authorList>
    </citation>
    <scope>NUCLEOTIDE SEQUENCE [GENOMIC DNA / MRNA]</scope>
    <scope>FUNCTION</scope>
    <scope>VARIANT HTX2 CYS-112</scope>
    <scope>CHARACTERIZATION OF VARIANT HTX2 CYS-112</scope>
    <scope>VARIANTS TRP-78 AND CYS-189</scope>
</reference>
<reference key="2">
    <citation type="journal article" date="2004" name="Nat. Genet.">
        <title>Complete sequencing and characterization of 21,243 full-length human cDNAs.</title>
        <authorList>
            <person name="Ota T."/>
            <person name="Suzuki Y."/>
            <person name="Nishikawa T."/>
            <person name="Otsuki T."/>
            <person name="Sugiyama T."/>
            <person name="Irie R."/>
            <person name="Wakamatsu A."/>
            <person name="Hayashi K."/>
            <person name="Sato H."/>
            <person name="Nagai K."/>
            <person name="Kimura K."/>
            <person name="Makita H."/>
            <person name="Sekine M."/>
            <person name="Obayashi M."/>
            <person name="Nishi T."/>
            <person name="Shibahara T."/>
            <person name="Tanaka T."/>
            <person name="Ishii S."/>
            <person name="Yamamoto J."/>
            <person name="Saito K."/>
            <person name="Kawai Y."/>
            <person name="Isono Y."/>
            <person name="Nakamura Y."/>
            <person name="Nagahari K."/>
            <person name="Murakami K."/>
            <person name="Yasuda T."/>
            <person name="Iwayanagi T."/>
            <person name="Wagatsuma M."/>
            <person name="Shiratori A."/>
            <person name="Sudo H."/>
            <person name="Hosoiri T."/>
            <person name="Kaku Y."/>
            <person name="Kodaira H."/>
            <person name="Kondo H."/>
            <person name="Sugawara M."/>
            <person name="Takahashi M."/>
            <person name="Kanda K."/>
            <person name="Yokoi T."/>
            <person name="Furuya T."/>
            <person name="Kikkawa E."/>
            <person name="Omura Y."/>
            <person name="Abe K."/>
            <person name="Kamihara K."/>
            <person name="Katsuta N."/>
            <person name="Sato K."/>
            <person name="Tanikawa M."/>
            <person name="Yamazaki M."/>
            <person name="Ninomiya K."/>
            <person name="Ishibashi T."/>
            <person name="Yamashita H."/>
            <person name="Murakawa K."/>
            <person name="Fujimori K."/>
            <person name="Tanai H."/>
            <person name="Kimata M."/>
            <person name="Watanabe M."/>
            <person name="Hiraoka S."/>
            <person name="Chiba Y."/>
            <person name="Ishida S."/>
            <person name="Ono Y."/>
            <person name="Takiguchi S."/>
            <person name="Watanabe S."/>
            <person name="Yosida M."/>
            <person name="Hotuta T."/>
            <person name="Kusano J."/>
            <person name="Kanehori K."/>
            <person name="Takahashi-Fujii A."/>
            <person name="Hara H."/>
            <person name="Tanase T.-O."/>
            <person name="Nomura Y."/>
            <person name="Togiya S."/>
            <person name="Komai F."/>
            <person name="Hara R."/>
            <person name="Takeuchi K."/>
            <person name="Arita M."/>
            <person name="Imose N."/>
            <person name="Musashino K."/>
            <person name="Yuuki H."/>
            <person name="Oshima A."/>
            <person name="Sasaki N."/>
            <person name="Aotsuka S."/>
            <person name="Yoshikawa Y."/>
            <person name="Matsunawa H."/>
            <person name="Ichihara T."/>
            <person name="Shiohata N."/>
            <person name="Sano S."/>
            <person name="Moriya S."/>
            <person name="Momiyama H."/>
            <person name="Satoh N."/>
            <person name="Takami S."/>
            <person name="Terashima Y."/>
            <person name="Suzuki O."/>
            <person name="Nakagawa S."/>
            <person name="Senoh A."/>
            <person name="Mizoguchi H."/>
            <person name="Goto Y."/>
            <person name="Shimizu F."/>
            <person name="Wakebe H."/>
            <person name="Hishigaki H."/>
            <person name="Watanabe T."/>
            <person name="Sugiyama A."/>
            <person name="Takemoto M."/>
            <person name="Kawakami B."/>
            <person name="Yamazaki M."/>
            <person name="Watanabe K."/>
            <person name="Kumagai A."/>
            <person name="Itakura S."/>
            <person name="Fukuzumi Y."/>
            <person name="Fujimori Y."/>
            <person name="Komiyama M."/>
            <person name="Tashiro H."/>
            <person name="Tanigami A."/>
            <person name="Fujiwara T."/>
            <person name="Ono T."/>
            <person name="Yamada K."/>
            <person name="Fujii Y."/>
            <person name="Ozaki K."/>
            <person name="Hirao M."/>
            <person name="Ohmori Y."/>
            <person name="Kawabata A."/>
            <person name="Hikiji T."/>
            <person name="Kobatake N."/>
            <person name="Inagaki H."/>
            <person name="Ikema Y."/>
            <person name="Okamoto S."/>
            <person name="Okitani R."/>
            <person name="Kawakami T."/>
            <person name="Noguchi S."/>
            <person name="Itoh T."/>
            <person name="Shigeta K."/>
            <person name="Senba T."/>
            <person name="Matsumura K."/>
            <person name="Nakajima Y."/>
            <person name="Mizuno T."/>
            <person name="Morinaga M."/>
            <person name="Sasaki M."/>
            <person name="Togashi T."/>
            <person name="Oyama M."/>
            <person name="Hata H."/>
            <person name="Watanabe M."/>
            <person name="Komatsu T."/>
            <person name="Mizushima-Sugano J."/>
            <person name="Satoh T."/>
            <person name="Shirai Y."/>
            <person name="Takahashi Y."/>
            <person name="Nakagawa K."/>
            <person name="Okumura K."/>
            <person name="Nagase T."/>
            <person name="Nomura N."/>
            <person name="Kikuchi H."/>
            <person name="Masuho Y."/>
            <person name="Yamashita R."/>
            <person name="Nakai K."/>
            <person name="Yada T."/>
            <person name="Nakamura Y."/>
            <person name="Ohara O."/>
            <person name="Isogai T."/>
            <person name="Sugano S."/>
        </authorList>
    </citation>
    <scope>NUCLEOTIDE SEQUENCE [LARGE SCALE MRNA]</scope>
    <source>
        <tissue>Subthalamic nucleus</tissue>
    </source>
</reference>
<reference key="3">
    <citation type="journal article" date="2005" name="Nature">
        <title>Generation and annotation of the DNA sequences of human chromosomes 2 and 4.</title>
        <authorList>
            <person name="Hillier L.W."/>
            <person name="Graves T.A."/>
            <person name="Fulton R.S."/>
            <person name="Fulton L.A."/>
            <person name="Pepin K.H."/>
            <person name="Minx P."/>
            <person name="Wagner-McPherson C."/>
            <person name="Layman D."/>
            <person name="Wylie K."/>
            <person name="Sekhon M."/>
            <person name="Becker M.C."/>
            <person name="Fewell G.A."/>
            <person name="Delehaunty K.D."/>
            <person name="Miner T.L."/>
            <person name="Nash W.E."/>
            <person name="Kremitzki C."/>
            <person name="Oddy L."/>
            <person name="Du H."/>
            <person name="Sun H."/>
            <person name="Bradshaw-Cordum H."/>
            <person name="Ali J."/>
            <person name="Carter J."/>
            <person name="Cordes M."/>
            <person name="Harris A."/>
            <person name="Isak A."/>
            <person name="van Brunt A."/>
            <person name="Nguyen C."/>
            <person name="Du F."/>
            <person name="Courtney L."/>
            <person name="Kalicki J."/>
            <person name="Ozersky P."/>
            <person name="Abbott S."/>
            <person name="Armstrong J."/>
            <person name="Belter E.A."/>
            <person name="Caruso L."/>
            <person name="Cedroni M."/>
            <person name="Cotton M."/>
            <person name="Davidson T."/>
            <person name="Desai A."/>
            <person name="Elliott G."/>
            <person name="Erb T."/>
            <person name="Fronick C."/>
            <person name="Gaige T."/>
            <person name="Haakenson W."/>
            <person name="Haglund K."/>
            <person name="Holmes A."/>
            <person name="Harkins R."/>
            <person name="Kim K."/>
            <person name="Kruchowski S.S."/>
            <person name="Strong C.M."/>
            <person name="Grewal N."/>
            <person name="Goyea E."/>
            <person name="Hou S."/>
            <person name="Levy A."/>
            <person name="Martinka S."/>
            <person name="Mead K."/>
            <person name="McLellan M.D."/>
            <person name="Meyer R."/>
            <person name="Randall-Maher J."/>
            <person name="Tomlinson C."/>
            <person name="Dauphin-Kohlberg S."/>
            <person name="Kozlowicz-Reilly A."/>
            <person name="Shah N."/>
            <person name="Swearengen-Shahid S."/>
            <person name="Snider J."/>
            <person name="Strong J.T."/>
            <person name="Thompson J."/>
            <person name="Yoakum M."/>
            <person name="Leonard S."/>
            <person name="Pearman C."/>
            <person name="Trani L."/>
            <person name="Radionenko M."/>
            <person name="Waligorski J.E."/>
            <person name="Wang C."/>
            <person name="Rock S.M."/>
            <person name="Tin-Wollam A.-M."/>
            <person name="Maupin R."/>
            <person name="Latreille P."/>
            <person name="Wendl M.C."/>
            <person name="Yang S.-P."/>
            <person name="Pohl C."/>
            <person name="Wallis J.W."/>
            <person name="Spieth J."/>
            <person name="Bieri T.A."/>
            <person name="Berkowicz N."/>
            <person name="Nelson J.O."/>
            <person name="Osborne J."/>
            <person name="Ding L."/>
            <person name="Meyer R."/>
            <person name="Sabo A."/>
            <person name="Shotland Y."/>
            <person name="Sinha P."/>
            <person name="Wohldmann P.E."/>
            <person name="Cook L.L."/>
            <person name="Hickenbotham M.T."/>
            <person name="Eldred J."/>
            <person name="Williams D."/>
            <person name="Jones T.A."/>
            <person name="She X."/>
            <person name="Ciccarelli F.D."/>
            <person name="Izaurralde E."/>
            <person name="Taylor J."/>
            <person name="Schmutz J."/>
            <person name="Myers R.M."/>
            <person name="Cox D.R."/>
            <person name="Huang X."/>
            <person name="McPherson J.D."/>
            <person name="Mardis E.R."/>
            <person name="Clifton S.W."/>
            <person name="Warren W.C."/>
            <person name="Chinwalla A.T."/>
            <person name="Eddy S.R."/>
            <person name="Marra M.A."/>
            <person name="Ovcharenko I."/>
            <person name="Furey T.S."/>
            <person name="Miller W."/>
            <person name="Eichler E.E."/>
            <person name="Bork P."/>
            <person name="Suyama M."/>
            <person name="Torrents D."/>
            <person name="Waterston R.H."/>
            <person name="Wilson R.K."/>
        </authorList>
    </citation>
    <scope>NUCLEOTIDE SEQUENCE [LARGE SCALE GENOMIC DNA]</scope>
</reference>
<reference key="4">
    <citation type="journal article" date="2004" name="Genome Res.">
        <title>The status, quality, and expansion of the NIH full-length cDNA project: the Mammalian Gene Collection (MGC).</title>
        <authorList>
            <consortium name="The MGC Project Team"/>
        </authorList>
    </citation>
    <scope>NUCLEOTIDE SEQUENCE [LARGE SCALE MRNA]</scope>
    <source>
        <tissue>Brain</tissue>
        <tissue>Lung</tissue>
    </source>
</reference>
<reference key="5">
    <citation type="journal article" date="2008" name="Biochim. Biophys. Acta">
        <title>Characterization of the glycosylphosphatidylinositol-anchor signal sequence of human Cryptic with a hydrophilic extension.</title>
        <authorList>
            <person name="Watanabe K."/>
            <person name="Nagaoka T."/>
            <person name="Strizzi L."/>
            <person name="Mancino M."/>
            <person name="Gonzales M."/>
            <person name="Bianco C."/>
            <person name="Salomon D.S."/>
        </authorList>
    </citation>
    <scope>SUBCELLULAR LOCATION</scope>
    <scope>GPI-ANCHOR AT ASP-158</scope>
    <scope>MUTAGENESIS OF 151-GLY--LEU-223</scope>
</reference>
<reference key="6">
    <citation type="journal article" date="2002" name="Am. J. Hum. Genet.">
        <title>CFC1 mutations in patients with transposition of the great arteries and double-outlet right ventricle.</title>
        <authorList>
            <person name="Goldmuntz E."/>
            <person name="Bamford R."/>
            <person name="Karkera J.D."/>
            <person name="dela Cruz J."/>
            <person name="Roessler E."/>
            <person name="Muenke M."/>
        </authorList>
    </citation>
    <scope>VARIANT TRP-78</scope>
    <scope>INVOLVEMENT IN HTX2</scope>
</reference>
<organism>
    <name type="scientific">Homo sapiens</name>
    <name type="common">Human</name>
    <dbReference type="NCBI Taxonomy" id="9606"/>
    <lineage>
        <taxon>Eukaryota</taxon>
        <taxon>Metazoa</taxon>
        <taxon>Chordata</taxon>
        <taxon>Craniata</taxon>
        <taxon>Vertebrata</taxon>
        <taxon>Euteleostomi</taxon>
        <taxon>Mammalia</taxon>
        <taxon>Eutheria</taxon>
        <taxon>Euarchontoglires</taxon>
        <taxon>Primates</taxon>
        <taxon>Haplorrhini</taxon>
        <taxon>Catarrhini</taxon>
        <taxon>Hominidae</taxon>
        <taxon>Homo</taxon>
    </lineage>
</organism>
<keyword id="KW-1003">Cell membrane</keyword>
<keyword id="KW-0217">Developmental protein</keyword>
<keyword id="KW-0225">Disease variant</keyword>
<keyword id="KW-1015">Disulfide bond</keyword>
<keyword id="KW-0245">EGF-like domain</keyword>
<keyword id="KW-0306">Gastrulation</keyword>
<keyword id="KW-0325">Glycoprotein</keyword>
<keyword id="KW-0336">GPI-anchor</keyword>
<keyword id="KW-1056">Heterotaxy</keyword>
<keyword id="KW-0449">Lipoprotein</keyword>
<keyword id="KW-0472">Membrane</keyword>
<keyword id="KW-1185">Reference proteome</keyword>
<keyword id="KW-0964">Secreted</keyword>
<keyword id="KW-0732">Signal</keyword>
<gene>
    <name type="primary">CFC1</name>
</gene>
<dbReference type="EMBL" id="AF312769">
    <property type="protein sequence ID" value="AAG30294.1"/>
    <property type="molecule type" value="mRNA"/>
</dbReference>
<dbReference type="EMBL" id="AF312925">
    <property type="protein sequence ID" value="AAG42475.1"/>
    <property type="molecule type" value="Genomic_DNA"/>
</dbReference>
<dbReference type="EMBL" id="AK315326">
    <property type="protein sequence ID" value="BAG37727.1"/>
    <property type="molecule type" value="mRNA"/>
</dbReference>
<dbReference type="EMBL" id="AC140481">
    <property type="status" value="NOT_ANNOTATED_CDS"/>
    <property type="molecule type" value="Genomic_DNA"/>
</dbReference>
<dbReference type="EMBL" id="BC069508">
    <property type="protein sequence ID" value="AAH69508.1"/>
    <property type="molecule type" value="mRNA"/>
</dbReference>
<dbReference type="EMBL" id="BC074825">
    <property type="protein sequence ID" value="AAH74825.1"/>
    <property type="molecule type" value="mRNA"/>
</dbReference>
<dbReference type="EMBL" id="BC074826">
    <property type="protein sequence ID" value="AAH74826.1"/>
    <property type="molecule type" value="mRNA"/>
</dbReference>
<dbReference type="EMBL" id="BC110080">
    <property type="protein sequence ID" value="AAI10081.1"/>
    <property type="molecule type" value="mRNA"/>
</dbReference>
<dbReference type="EMBL" id="BC146897">
    <property type="protein sequence ID" value="AAI46898.1"/>
    <property type="molecule type" value="mRNA"/>
</dbReference>
<dbReference type="CCDS" id="CCDS2162.1"/>
<dbReference type="RefSeq" id="NP_001257349.1">
    <property type="nucleotide sequence ID" value="NM_001270420.1"/>
</dbReference>
<dbReference type="RefSeq" id="NP_001257350.1">
    <property type="nucleotide sequence ID" value="NM_001270421.1"/>
</dbReference>
<dbReference type="RefSeq" id="NP_115934.1">
    <property type="nucleotide sequence ID" value="NM_032545.4"/>
</dbReference>
<dbReference type="SMR" id="P0CG37"/>
<dbReference type="BioGRID" id="121022">
    <property type="interactions" value="151"/>
</dbReference>
<dbReference type="FunCoup" id="P0CG37">
    <property type="interactions" value="17"/>
</dbReference>
<dbReference type="IntAct" id="P0CG37">
    <property type="interactions" value="125"/>
</dbReference>
<dbReference type="STRING" id="9606.ENSP00000259216"/>
<dbReference type="GlyCosmos" id="P0CG37">
    <property type="glycosylation" value="1 site, No reported glycans"/>
</dbReference>
<dbReference type="GlyGen" id="P0CG37">
    <property type="glycosylation" value="1 site"/>
</dbReference>
<dbReference type="iPTMnet" id="P0CG37"/>
<dbReference type="PhosphoSitePlus" id="P0CG37"/>
<dbReference type="BioMuta" id="CFC1"/>
<dbReference type="DMDM" id="300680886"/>
<dbReference type="MassIVE" id="P0CG37"/>
<dbReference type="PaxDb" id="9606-ENSP00000259216"/>
<dbReference type="PeptideAtlas" id="P0CG37"/>
<dbReference type="ProteomicsDB" id="52467"/>
<dbReference type="ABCD" id="P0CG37">
    <property type="antibodies" value="8 sequenced antibodies"/>
</dbReference>
<dbReference type="Antibodypedia" id="33508">
    <property type="antibodies" value="245 antibodies from 30 providers"/>
</dbReference>
<dbReference type="DNASU" id="55997"/>
<dbReference type="Ensembl" id="ENST00000259216.6">
    <property type="protein sequence ID" value="ENSP00000259216.5"/>
    <property type="gene ID" value="ENSG00000136698.10"/>
</dbReference>
<dbReference type="GeneID" id="55997"/>
<dbReference type="KEGG" id="hsa:55997"/>
<dbReference type="MANE-Select" id="ENST00000259216.6">
    <property type="protein sequence ID" value="ENSP00000259216.5"/>
    <property type="RefSeq nucleotide sequence ID" value="NM_032545.4"/>
    <property type="RefSeq protein sequence ID" value="NP_115934.1"/>
</dbReference>
<dbReference type="UCSC" id="uc002tro.3">
    <property type="organism name" value="human"/>
</dbReference>
<dbReference type="AGR" id="HGNC:18292"/>
<dbReference type="CTD" id="55997"/>
<dbReference type="DisGeNET" id="55997"/>
<dbReference type="GeneCards" id="CFC1"/>
<dbReference type="HGNC" id="HGNC:18292">
    <property type="gene designation" value="CFC1"/>
</dbReference>
<dbReference type="HPA" id="ENSG00000136698">
    <property type="expression patterns" value="Tissue enhanced (brain, pancreas, pituitary gland)"/>
</dbReference>
<dbReference type="MalaCards" id="CFC1"/>
<dbReference type="MIM" id="605194">
    <property type="type" value="gene"/>
</dbReference>
<dbReference type="MIM" id="605376">
    <property type="type" value="phenotype"/>
</dbReference>
<dbReference type="neXtProt" id="NX_P0CG37"/>
<dbReference type="OpenTargets" id="ENSG00000136698"/>
<dbReference type="Orphanet" id="244283">
    <property type="disease" value="Biliary atresia with splenic malformation syndrome"/>
</dbReference>
<dbReference type="Orphanet" id="216729">
    <property type="disease" value="Congenitally uncorrected transposition of the great arteries with cardiac malformation"/>
</dbReference>
<dbReference type="Orphanet" id="99042">
    <property type="disease" value="Congenitally uncorrected transposition of the great arteries with coarctation"/>
</dbReference>
<dbReference type="Orphanet" id="216718">
    <property type="disease" value="Isolated congenitally uncorrected transposition of the great arteries"/>
</dbReference>
<dbReference type="Orphanet" id="157769">
    <property type="disease" value="Situs ambiguus"/>
</dbReference>
<dbReference type="PharmGKB" id="PA134916180"/>
<dbReference type="VEuPathDB" id="HostDB:ENSG00000136698"/>
<dbReference type="eggNOG" id="KOG1217">
    <property type="taxonomic scope" value="Eukaryota"/>
</dbReference>
<dbReference type="GeneTree" id="ENSGT00940000162302"/>
<dbReference type="HOGENOM" id="CLU_092661_0_0_1"/>
<dbReference type="InParanoid" id="P0CG37"/>
<dbReference type="OMA" id="PGSCDPK"/>
<dbReference type="OrthoDB" id="9893603at2759"/>
<dbReference type="PAN-GO" id="P0CG37">
    <property type="GO annotations" value="9 GO annotations based on evolutionary models"/>
</dbReference>
<dbReference type="PhylomeDB" id="P0CG37"/>
<dbReference type="TreeFam" id="TF333187"/>
<dbReference type="PathwayCommons" id="P0CG37"/>
<dbReference type="Reactome" id="R-HSA-1181150">
    <property type="pathway name" value="Signaling by NODAL"/>
</dbReference>
<dbReference type="Reactome" id="R-HSA-1433617">
    <property type="pathway name" value="Regulation of signaling by NODAL"/>
</dbReference>
<dbReference type="BioGRID-ORCS" id="55997">
    <property type="hits" value="27 hits in 1025 CRISPR screens"/>
</dbReference>
<dbReference type="ChiTaRS" id="CFC1">
    <property type="organism name" value="human"/>
</dbReference>
<dbReference type="GenomeRNAi" id="55997"/>
<dbReference type="Pharos" id="P0CG37">
    <property type="development level" value="Tbio"/>
</dbReference>
<dbReference type="PRO" id="PR:P0CG37"/>
<dbReference type="Proteomes" id="UP000005640">
    <property type="component" value="Chromosome 2"/>
</dbReference>
<dbReference type="RNAct" id="P0CG37">
    <property type="molecule type" value="protein"/>
</dbReference>
<dbReference type="Bgee" id="ENSG00000136698">
    <property type="expression patterns" value="Expressed in islet of Langerhans and 61 other cell types or tissues"/>
</dbReference>
<dbReference type="ExpressionAtlas" id="P0CG37">
    <property type="expression patterns" value="baseline and differential"/>
</dbReference>
<dbReference type="GO" id="GO:0009986">
    <property type="term" value="C:cell surface"/>
    <property type="evidence" value="ECO:0000318"/>
    <property type="project" value="GO_Central"/>
</dbReference>
<dbReference type="GO" id="GO:0005576">
    <property type="term" value="C:extracellular region"/>
    <property type="evidence" value="ECO:0000318"/>
    <property type="project" value="GO_Central"/>
</dbReference>
<dbReference type="GO" id="GO:0005886">
    <property type="term" value="C:plasma membrane"/>
    <property type="evidence" value="ECO:0007669"/>
    <property type="project" value="UniProtKB-SubCell"/>
</dbReference>
<dbReference type="GO" id="GO:0098552">
    <property type="term" value="C:side of membrane"/>
    <property type="evidence" value="ECO:0007669"/>
    <property type="project" value="UniProtKB-KW"/>
</dbReference>
<dbReference type="GO" id="GO:0070697">
    <property type="term" value="F:activin receptor binding"/>
    <property type="evidence" value="ECO:0000318"/>
    <property type="project" value="GO_Central"/>
</dbReference>
<dbReference type="GO" id="GO:0038100">
    <property type="term" value="F:nodal binding"/>
    <property type="evidence" value="ECO:0000353"/>
    <property type="project" value="UniProtKB"/>
</dbReference>
<dbReference type="GO" id="GO:0009952">
    <property type="term" value="P:anterior/posterior pattern specification"/>
    <property type="evidence" value="ECO:0000318"/>
    <property type="project" value="GO_Central"/>
</dbReference>
<dbReference type="GO" id="GO:0001568">
    <property type="term" value="P:blood vessel development"/>
    <property type="evidence" value="ECO:0000318"/>
    <property type="project" value="GO_Central"/>
</dbReference>
<dbReference type="GO" id="GO:0007368">
    <property type="term" value="P:determination of left/right symmetry"/>
    <property type="evidence" value="ECO:0000318"/>
    <property type="project" value="GO_Central"/>
</dbReference>
<dbReference type="GO" id="GO:0007369">
    <property type="term" value="P:gastrulation"/>
    <property type="evidence" value="ECO:0007669"/>
    <property type="project" value="UniProtKB-KW"/>
</dbReference>
<dbReference type="GO" id="GO:0007507">
    <property type="term" value="P:heart development"/>
    <property type="evidence" value="ECO:0000318"/>
    <property type="project" value="GO_Central"/>
</dbReference>
<dbReference type="GO" id="GO:0038092">
    <property type="term" value="P:nodal signaling pathway"/>
    <property type="evidence" value="ECO:0000315"/>
    <property type="project" value="UniProtKB"/>
</dbReference>
<dbReference type="CDD" id="cd00054">
    <property type="entry name" value="EGF_CA"/>
    <property type="match status" value="1"/>
</dbReference>
<dbReference type="FunFam" id="2.10.25.10:FF:000421">
    <property type="entry name" value="Teratocarcinoma-derived growth factor"/>
    <property type="match status" value="1"/>
</dbReference>
<dbReference type="Gene3D" id="2.10.25.10">
    <property type="entry name" value="Laminin"/>
    <property type="match status" value="1"/>
</dbReference>
<dbReference type="InterPro" id="IPR019011">
    <property type="entry name" value="Cryptic/Cripto_CFC-dom"/>
</dbReference>
<dbReference type="InterPro" id="IPR000742">
    <property type="entry name" value="EGF-like_dom"/>
</dbReference>
<dbReference type="Pfam" id="PF09443">
    <property type="entry name" value="CFC"/>
    <property type="match status" value="1"/>
</dbReference>
<dbReference type="SUPFAM" id="SSF57196">
    <property type="entry name" value="EGF/Laminin"/>
    <property type="match status" value="2"/>
</dbReference>
<dbReference type="PROSITE" id="PS00022">
    <property type="entry name" value="EGF_1"/>
    <property type="match status" value="1"/>
</dbReference>
<dbReference type="PROSITE" id="PS50026">
    <property type="entry name" value="EGF_3"/>
    <property type="match status" value="1"/>
</dbReference>